<dbReference type="EC" id="3.1.3.5" evidence="1"/>
<dbReference type="EMBL" id="AE017285">
    <property type="protein sequence ID" value="AAS96615.1"/>
    <property type="molecule type" value="Genomic_DNA"/>
</dbReference>
<dbReference type="RefSeq" id="WP_010939419.1">
    <property type="nucleotide sequence ID" value="NC_002937.3"/>
</dbReference>
<dbReference type="RefSeq" id="YP_011355.1">
    <property type="nucleotide sequence ID" value="NC_002937.3"/>
</dbReference>
<dbReference type="SMR" id="Q72A55"/>
<dbReference type="IntAct" id="Q72A55">
    <property type="interactions" value="1"/>
</dbReference>
<dbReference type="STRING" id="882.DVU_2142"/>
<dbReference type="PaxDb" id="882-DVU_2142"/>
<dbReference type="EnsemblBacteria" id="AAS96615">
    <property type="protein sequence ID" value="AAS96615"/>
    <property type="gene ID" value="DVU_2142"/>
</dbReference>
<dbReference type="KEGG" id="dvu:DVU_2142"/>
<dbReference type="PATRIC" id="fig|882.5.peg.1953"/>
<dbReference type="eggNOG" id="COG0496">
    <property type="taxonomic scope" value="Bacteria"/>
</dbReference>
<dbReference type="HOGENOM" id="CLU_045192_1_2_7"/>
<dbReference type="OrthoDB" id="9780815at2"/>
<dbReference type="PhylomeDB" id="Q72A55"/>
<dbReference type="Proteomes" id="UP000002194">
    <property type="component" value="Chromosome"/>
</dbReference>
<dbReference type="GO" id="GO:0005737">
    <property type="term" value="C:cytoplasm"/>
    <property type="evidence" value="ECO:0007669"/>
    <property type="project" value="UniProtKB-SubCell"/>
</dbReference>
<dbReference type="GO" id="GO:0008253">
    <property type="term" value="F:5'-nucleotidase activity"/>
    <property type="evidence" value="ECO:0007669"/>
    <property type="project" value="UniProtKB-UniRule"/>
</dbReference>
<dbReference type="GO" id="GO:0046872">
    <property type="term" value="F:metal ion binding"/>
    <property type="evidence" value="ECO:0007669"/>
    <property type="project" value="UniProtKB-UniRule"/>
</dbReference>
<dbReference type="GO" id="GO:0000166">
    <property type="term" value="F:nucleotide binding"/>
    <property type="evidence" value="ECO:0007669"/>
    <property type="project" value="UniProtKB-KW"/>
</dbReference>
<dbReference type="Gene3D" id="3.40.1210.10">
    <property type="entry name" value="Survival protein SurE-like phosphatase/nucleotidase"/>
    <property type="match status" value="1"/>
</dbReference>
<dbReference type="HAMAP" id="MF_00060">
    <property type="entry name" value="SurE"/>
    <property type="match status" value="1"/>
</dbReference>
<dbReference type="InterPro" id="IPR030048">
    <property type="entry name" value="SurE"/>
</dbReference>
<dbReference type="InterPro" id="IPR002828">
    <property type="entry name" value="SurE-like_Pase/nucleotidase"/>
</dbReference>
<dbReference type="InterPro" id="IPR036523">
    <property type="entry name" value="SurE-like_sf"/>
</dbReference>
<dbReference type="NCBIfam" id="NF001490">
    <property type="entry name" value="PRK00346.1-4"/>
    <property type="match status" value="1"/>
</dbReference>
<dbReference type="NCBIfam" id="TIGR00087">
    <property type="entry name" value="surE"/>
    <property type="match status" value="1"/>
</dbReference>
<dbReference type="PANTHER" id="PTHR30457">
    <property type="entry name" value="5'-NUCLEOTIDASE SURE"/>
    <property type="match status" value="1"/>
</dbReference>
<dbReference type="PANTHER" id="PTHR30457:SF0">
    <property type="entry name" value="PHOSPHATASE, PUTATIVE (AFU_ORTHOLOGUE AFUA_4G01070)-RELATED"/>
    <property type="match status" value="1"/>
</dbReference>
<dbReference type="Pfam" id="PF01975">
    <property type="entry name" value="SurE"/>
    <property type="match status" value="1"/>
</dbReference>
<dbReference type="SUPFAM" id="SSF64167">
    <property type="entry name" value="SurE-like"/>
    <property type="match status" value="1"/>
</dbReference>
<gene>
    <name evidence="1" type="primary">surE</name>
    <name type="ordered locus">DVU_2142</name>
</gene>
<sequence>MRIALTNDDGIQAPGLRAIYKALIEAGHTVDVVAPVTEQSAVGHAVTIAMPLRVKVFHENGFRGHGVYGTPTDCMKLGLSSLLEHKPELVVSGINAGANVGPDILYSGTVSAATEAAHMGYRAVALSYDSFRPEDISAHARHAAALLPHIEWAGLPERCVVNINYPAVPVESIKGVRVCPQTRAVWHDWYEHRTDPRGGSYWWLNGVIPPETVAPGTDRALLTEGYITVTPLRFDFTDSETLTRLASLEE</sequence>
<proteinExistence type="inferred from homology"/>
<comment type="function">
    <text evidence="1">Nucleotidase that shows phosphatase activity on nucleoside 5'-monophosphates.</text>
</comment>
<comment type="catalytic activity">
    <reaction evidence="1">
        <text>a ribonucleoside 5'-phosphate + H2O = a ribonucleoside + phosphate</text>
        <dbReference type="Rhea" id="RHEA:12484"/>
        <dbReference type="ChEBI" id="CHEBI:15377"/>
        <dbReference type="ChEBI" id="CHEBI:18254"/>
        <dbReference type="ChEBI" id="CHEBI:43474"/>
        <dbReference type="ChEBI" id="CHEBI:58043"/>
        <dbReference type="EC" id="3.1.3.5"/>
    </reaction>
</comment>
<comment type="cofactor">
    <cofactor evidence="1">
        <name>a divalent metal cation</name>
        <dbReference type="ChEBI" id="CHEBI:60240"/>
    </cofactor>
    <text evidence="1">Binds 1 divalent metal cation per subunit.</text>
</comment>
<comment type="subcellular location">
    <subcellularLocation>
        <location evidence="1">Cytoplasm</location>
    </subcellularLocation>
</comment>
<comment type="similarity">
    <text evidence="1">Belongs to the SurE nucleotidase family.</text>
</comment>
<accession>Q72A55</accession>
<reference key="1">
    <citation type="journal article" date="2004" name="Nat. Biotechnol.">
        <title>The genome sequence of the anaerobic, sulfate-reducing bacterium Desulfovibrio vulgaris Hildenborough.</title>
        <authorList>
            <person name="Heidelberg J.F."/>
            <person name="Seshadri R."/>
            <person name="Haveman S.A."/>
            <person name="Hemme C.L."/>
            <person name="Paulsen I.T."/>
            <person name="Kolonay J.F."/>
            <person name="Eisen J.A."/>
            <person name="Ward N.L."/>
            <person name="Methe B.A."/>
            <person name="Brinkac L.M."/>
            <person name="Daugherty S.C."/>
            <person name="DeBoy R.T."/>
            <person name="Dodson R.J."/>
            <person name="Durkin A.S."/>
            <person name="Madupu R."/>
            <person name="Nelson W.C."/>
            <person name="Sullivan S.A."/>
            <person name="Fouts D.E."/>
            <person name="Haft D.H."/>
            <person name="Selengut J."/>
            <person name="Peterson J.D."/>
            <person name="Davidsen T.M."/>
            <person name="Zafar N."/>
            <person name="Zhou L."/>
            <person name="Radune D."/>
            <person name="Dimitrov G."/>
            <person name="Hance M."/>
            <person name="Tran K."/>
            <person name="Khouri H.M."/>
            <person name="Gill J."/>
            <person name="Utterback T.R."/>
            <person name="Feldblyum T.V."/>
            <person name="Wall J.D."/>
            <person name="Voordouw G."/>
            <person name="Fraser C.M."/>
        </authorList>
    </citation>
    <scope>NUCLEOTIDE SEQUENCE [LARGE SCALE GENOMIC DNA]</scope>
    <source>
        <strain>ATCC 29579 / DSM 644 / CCUG 34227 / NCIMB 8303 / VKM B-1760 / Hildenborough</strain>
    </source>
</reference>
<protein>
    <recommendedName>
        <fullName evidence="1">5'-nucleotidase SurE</fullName>
        <ecNumber evidence="1">3.1.3.5</ecNumber>
    </recommendedName>
    <alternativeName>
        <fullName evidence="1">Nucleoside 5'-monophosphate phosphohydrolase</fullName>
    </alternativeName>
</protein>
<keyword id="KW-0963">Cytoplasm</keyword>
<keyword id="KW-0378">Hydrolase</keyword>
<keyword id="KW-0479">Metal-binding</keyword>
<keyword id="KW-0547">Nucleotide-binding</keyword>
<keyword id="KW-1185">Reference proteome</keyword>
<feature type="chain" id="PRO_0000235612" description="5'-nucleotidase SurE">
    <location>
        <begin position="1"/>
        <end position="250"/>
    </location>
</feature>
<feature type="binding site" evidence="1">
    <location>
        <position position="8"/>
    </location>
    <ligand>
        <name>a divalent metal cation</name>
        <dbReference type="ChEBI" id="CHEBI:60240"/>
    </ligand>
</feature>
<feature type="binding site" evidence="1">
    <location>
        <position position="9"/>
    </location>
    <ligand>
        <name>a divalent metal cation</name>
        <dbReference type="ChEBI" id="CHEBI:60240"/>
    </ligand>
</feature>
<feature type="binding site" evidence="1">
    <location>
        <position position="40"/>
    </location>
    <ligand>
        <name>a divalent metal cation</name>
        <dbReference type="ChEBI" id="CHEBI:60240"/>
    </ligand>
</feature>
<feature type="binding site" evidence="1">
    <location>
        <position position="95"/>
    </location>
    <ligand>
        <name>a divalent metal cation</name>
        <dbReference type="ChEBI" id="CHEBI:60240"/>
    </ligand>
</feature>
<evidence type="ECO:0000255" key="1">
    <source>
        <dbReference type="HAMAP-Rule" id="MF_00060"/>
    </source>
</evidence>
<name>SURE_NITV2</name>
<organism>
    <name type="scientific">Nitratidesulfovibrio vulgaris (strain ATCC 29579 / DSM 644 / CCUG 34227 / NCIMB 8303 / VKM B-1760 / Hildenborough)</name>
    <name type="common">Desulfovibrio vulgaris</name>
    <dbReference type="NCBI Taxonomy" id="882"/>
    <lineage>
        <taxon>Bacteria</taxon>
        <taxon>Pseudomonadati</taxon>
        <taxon>Thermodesulfobacteriota</taxon>
        <taxon>Desulfovibrionia</taxon>
        <taxon>Desulfovibrionales</taxon>
        <taxon>Desulfovibrionaceae</taxon>
        <taxon>Nitratidesulfovibrio</taxon>
    </lineage>
</organism>